<dbReference type="EMBL" id="BA000033">
    <property type="protein sequence ID" value="BAB94360.1"/>
    <property type="molecule type" value="Genomic_DNA"/>
</dbReference>
<dbReference type="RefSeq" id="WP_001273586.1">
    <property type="nucleotide sequence ID" value="NC_003923.1"/>
</dbReference>
<dbReference type="SMR" id="P66062"/>
<dbReference type="GeneID" id="98344874"/>
<dbReference type="KEGG" id="sam:MW0495"/>
<dbReference type="HOGENOM" id="CLU_086499_3_2_9"/>
<dbReference type="GO" id="GO:0022625">
    <property type="term" value="C:cytosolic large ribosomal subunit"/>
    <property type="evidence" value="ECO:0007669"/>
    <property type="project" value="TreeGrafter"/>
</dbReference>
<dbReference type="GO" id="GO:0003729">
    <property type="term" value="F:mRNA binding"/>
    <property type="evidence" value="ECO:0007669"/>
    <property type="project" value="TreeGrafter"/>
</dbReference>
<dbReference type="GO" id="GO:0003735">
    <property type="term" value="F:structural constituent of ribosome"/>
    <property type="evidence" value="ECO:0007669"/>
    <property type="project" value="InterPro"/>
</dbReference>
<dbReference type="GO" id="GO:0006412">
    <property type="term" value="P:translation"/>
    <property type="evidence" value="ECO:0007669"/>
    <property type="project" value="UniProtKB-UniRule"/>
</dbReference>
<dbReference type="CDD" id="cd00387">
    <property type="entry name" value="Ribosomal_L7_L12"/>
    <property type="match status" value="1"/>
</dbReference>
<dbReference type="FunFam" id="1.20.5.710:FF:000002">
    <property type="entry name" value="50S ribosomal protein L7/L12"/>
    <property type="match status" value="1"/>
</dbReference>
<dbReference type="FunFam" id="3.30.1390.10:FF:000001">
    <property type="entry name" value="50S ribosomal protein L7/L12"/>
    <property type="match status" value="1"/>
</dbReference>
<dbReference type="Gene3D" id="3.30.1390.10">
    <property type="match status" value="1"/>
</dbReference>
<dbReference type="Gene3D" id="1.20.5.710">
    <property type="entry name" value="Single helix bin"/>
    <property type="match status" value="1"/>
</dbReference>
<dbReference type="HAMAP" id="MF_00368">
    <property type="entry name" value="Ribosomal_bL12"/>
    <property type="match status" value="1"/>
</dbReference>
<dbReference type="InterPro" id="IPR000206">
    <property type="entry name" value="Ribosomal_bL12"/>
</dbReference>
<dbReference type="InterPro" id="IPR013823">
    <property type="entry name" value="Ribosomal_bL12_C"/>
</dbReference>
<dbReference type="InterPro" id="IPR014719">
    <property type="entry name" value="Ribosomal_bL12_C/ClpS-like"/>
</dbReference>
<dbReference type="InterPro" id="IPR008932">
    <property type="entry name" value="Ribosomal_bL12_oligo"/>
</dbReference>
<dbReference type="InterPro" id="IPR036235">
    <property type="entry name" value="Ribosomal_bL12_oligo_N_sf"/>
</dbReference>
<dbReference type="NCBIfam" id="TIGR00855">
    <property type="entry name" value="L12"/>
    <property type="match status" value="1"/>
</dbReference>
<dbReference type="PANTHER" id="PTHR45987">
    <property type="entry name" value="39S RIBOSOMAL PROTEIN L12"/>
    <property type="match status" value="1"/>
</dbReference>
<dbReference type="PANTHER" id="PTHR45987:SF4">
    <property type="entry name" value="LARGE RIBOSOMAL SUBUNIT PROTEIN BL12M"/>
    <property type="match status" value="1"/>
</dbReference>
<dbReference type="Pfam" id="PF00542">
    <property type="entry name" value="Ribosomal_L12"/>
    <property type="match status" value="1"/>
</dbReference>
<dbReference type="Pfam" id="PF16320">
    <property type="entry name" value="Ribosomal_L12_N"/>
    <property type="match status" value="1"/>
</dbReference>
<dbReference type="SUPFAM" id="SSF54736">
    <property type="entry name" value="ClpS-like"/>
    <property type="match status" value="1"/>
</dbReference>
<dbReference type="SUPFAM" id="SSF48300">
    <property type="entry name" value="Ribosomal protein L7/12, oligomerisation (N-terminal) domain"/>
    <property type="match status" value="1"/>
</dbReference>
<comment type="function">
    <text evidence="1">Forms part of the ribosomal stalk which helps the ribosome interact with GTP-bound translation factors. Is thus essential for accurate translation.</text>
</comment>
<comment type="subunit">
    <text evidence="1">Homodimer. Part of the ribosomal stalk of the 50S ribosomal subunit. Forms a multimeric L10(L12)X complex, where L10 forms an elongated spine to which 2 to 4 L12 dimers bind in a sequential fashion. Binds GTP-bound translation factors.</text>
</comment>
<comment type="similarity">
    <text evidence="1">Belongs to the bacterial ribosomal protein bL12 family.</text>
</comment>
<evidence type="ECO:0000255" key="1">
    <source>
        <dbReference type="HAMAP-Rule" id="MF_00368"/>
    </source>
</evidence>
<evidence type="ECO:0000305" key="2"/>
<feature type="chain" id="PRO_0000157579" description="Large ribosomal subunit protein bL12">
    <location>
        <begin position="1"/>
        <end position="122"/>
    </location>
</feature>
<reference key="1">
    <citation type="journal article" date="2002" name="Lancet">
        <title>Genome and virulence determinants of high virulence community-acquired MRSA.</title>
        <authorList>
            <person name="Baba T."/>
            <person name="Takeuchi F."/>
            <person name="Kuroda M."/>
            <person name="Yuzawa H."/>
            <person name="Aoki K."/>
            <person name="Oguchi A."/>
            <person name="Nagai Y."/>
            <person name="Iwama N."/>
            <person name="Asano K."/>
            <person name="Naimi T."/>
            <person name="Kuroda H."/>
            <person name="Cui L."/>
            <person name="Yamamoto K."/>
            <person name="Hiramatsu K."/>
        </authorList>
    </citation>
    <scope>NUCLEOTIDE SEQUENCE [LARGE SCALE GENOMIC DNA]</scope>
    <source>
        <strain>MW2</strain>
    </source>
</reference>
<name>RL7_STAAW</name>
<gene>
    <name evidence="1" type="primary">rplL</name>
    <name type="ordered locus">MW0495</name>
</gene>
<keyword id="KW-0687">Ribonucleoprotein</keyword>
<keyword id="KW-0689">Ribosomal protein</keyword>
<proteinExistence type="inferred from homology"/>
<sequence length="122" mass="12712">MANHEQIIEAIKEMSVLELNDLVKAIEEEFGVTAAAPVAVAGAAGGADAAAEKTEFDVELTSAGSSKIKVVKAVKEATGLGLKDAKELVDGAPKVIKEALPKEEAEKLKEQLEEVGATVELK</sequence>
<protein>
    <recommendedName>
        <fullName evidence="1">Large ribosomal subunit protein bL12</fullName>
    </recommendedName>
    <alternativeName>
        <fullName evidence="2">50S ribosomal protein L7/L12</fullName>
    </alternativeName>
</protein>
<organism>
    <name type="scientific">Staphylococcus aureus (strain MW2)</name>
    <dbReference type="NCBI Taxonomy" id="196620"/>
    <lineage>
        <taxon>Bacteria</taxon>
        <taxon>Bacillati</taxon>
        <taxon>Bacillota</taxon>
        <taxon>Bacilli</taxon>
        <taxon>Bacillales</taxon>
        <taxon>Staphylococcaceae</taxon>
        <taxon>Staphylococcus</taxon>
    </lineage>
</organism>
<accession>P66062</accession>
<accession>Q99W66</accession>